<evidence type="ECO:0000255" key="1">
    <source>
        <dbReference type="HAMAP-Rule" id="MF_00558"/>
    </source>
</evidence>
<accession>A5UCR4</accession>
<organism>
    <name type="scientific">Haemophilus influenzae (strain PittEE)</name>
    <dbReference type="NCBI Taxonomy" id="374930"/>
    <lineage>
        <taxon>Bacteria</taxon>
        <taxon>Pseudomonadati</taxon>
        <taxon>Pseudomonadota</taxon>
        <taxon>Gammaproteobacteria</taxon>
        <taxon>Pasteurellales</taxon>
        <taxon>Pasteurellaceae</taxon>
        <taxon>Haemophilus</taxon>
    </lineage>
</organism>
<reference key="1">
    <citation type="journal article" date="2007" name="Genome Biol.">
        <title>Characterization and modeling of the Haemophilus influenzae core and supragenomes based on the complete genomic sequences of Rd and 12 clinical nontypeable strains.</title>
        <authorList>
            <person name="Hogg J.S."/>
            <person name="Hu F.Z."/>
            <person name="Janto B."/>
            <person name="Boissy R."/>
            <person name="Hayes J."/>
            <person name="Keefe R."/>
            <person name="Post J.C."/>
            <person name="Ehrlich G.D."/>
        </authorList>
    </citation>
    <scope>NUCLEOTIDE SEQUENCE [LARGE SCALE GENOMIC DNA]</scope>
    <source>
        <strain>PittEE</strain>
    </source>
</reference>
<sequence>MNLHEYQAKQLFEHYGLPVKNGAVCQSVDEVDLVLAQLSGDKWAAKCQVHAGGRGKAGGVKLVQDVEEARSFAEKWLGQRLVTFQTDKLGQPVNQIYFEETCDIDKEFYLSAVVDRASQKVVFIASPAGGMDIEEVAQNTPHLLHKVEIDPLFGGLPYQGRELAFKLGLSGTQNKQFTDIFMGLSRLFLEKDLSLLEVNPLVLTQQGNLVCLDAKIAVDDNALFRHKDLSALQDLTQNDAREAEAEKFQLNYVALEGDIGCMVNGAGLAMGTMDIVKLYGGKPANFLDVGGGATKERVAEAFKIILTDPSVKVILVNIFGGIVRCDLIAEGVIAAVNEVGVRVPVVVRLEGTNAEIGRQILAESDVNILTAHSLQQAAELAVNAAKGEH</sequence>
<comment type="function">
    <text evidence="1">Succinyl-CoA synthetase functions in the citric acid cycle (TCA), coupling the hydrolysis of succinyl-CoA to the synthesis of either ATP or GTP and thus represents the only step of substrate-level phosphorylation in the TCA. The beta subunit provides nucleotide specificity of the enzyme and binds the substrate succinate, while the binding sites for coenzyme A and phosphate are found in the alpha subunit.</text>
</comment>
<comment type="catalytic activity">
    <reaction evidence="1">
        <text>succinate + ATP + CoA = succinyl-CoA + ADP + phosphate</text>
        <dbReference type="Rhea" id="RHEA:17661"/>
        <dbReference type="ChEBI" id="CHEBI:30031"/>
        <dbReference type="ChEBI" id="CHEBI:30616"/>
        <dbReference type="ChEBI" id="CHEBI:43474"/>
        <dbReference type="ChEBI" id="CHEBI:57287"/>
        <dbReference type="ChEBI" id="CHEBI:57292"/>
        <dbReference type="ChEBI" id="CHEBI:456216"/>
        <dbReference type="EC" id="6.2.1.5"/>
    </reaction>
    <physiologicalReaction direction="right-to-left" evidence="1">
        <dbReference type="Rhea" id="RHEA:17663"/>
    </physiologicalReaction>
</comment>
<comment type="catalytic activity">
    <reaction evidence="1">
        <text>GTP + succinate + CoA = succinyl-CoA + GDP + phosphate</text>
        <dbReference type="Rhea" id="RHEA:22120"/>
        <dbReference type="ChEBI" id="CHEBI:30031"/>
        <dbReference type="ChEBI" id="CHEBI:37565"/>
        <dbReference type="ChEBI" id="CHEBI:43474"/>
        <dbReference type="ChEBI" id="CHEBI:57287"/>
        <dbReference type="ChEBI" id="CHEBI:57292"/>
        <dbReference type="ChEBI" id="CHEBI:58189"/>
    </reaction>
    <physiologicalReaction direction="right-to-left" evidence="1">
        <dbReference type="Rhea" id="RHEA:22122"/>
    </physiologicalReaction>
</comment>
<comment type="cofactor">
    <cofactor evidence="1">
        <name>Mg(2+)</name>
        <dbReference type="ChEBI" id="CHEBI:18420"/>
    </cofactor>
    <text evidence="1">Binds 1 Mg(2+) ion per subunit.</text>
</comment>
<comment type="pathway">
    <text evidence="1">Carbohydrate metabolism; tricarboxylic acid cycle; succinate from succinyl-CoA (ligase route): step 1/1.</text>
</comment>
<comment type="subunit">
    <text evidence="1">Heterotetramer of two alpha and two beta subunits.</text>
</comment>
<comment type="similarity">
    <text evidence="1">Belongs to the succinate/malate CoA ligase beta subunit family.</text>
</comment>
<gene>
    <name evidence="1" type="primary">sucC</name>
    <name type="ordered locus">CGSHiEE_06060</name>
</gene>
<feature type="chain" id="PRO_1000082098" description="Succinate--CoA ligase [ADP-forming] subunit beta">
    <location>
        <begin position="1"/>
        <end position="389"/>
    </location>
</feature>
<feature type="binding site" evidence="1">
    <location>
        <position position="46"/>
    </location>
    <ligand>
        <name>ATP</name>
        <dbReference type="ChEBI" id="CHEBI:30616"/>
    </ligand>
</feature>
<feature type="binding site" evidence="1">
    <location>
        <begin position="53"/>
        <end position="55"/>
    </location>
    <ligand>
        <name>ATP</name>
        <dbReference type="ChEBI" id="CHEBI:30616"/>
    </ligand>
</feature>
<feature type="binding site" evidence="1">
    <location>
        <position position="99"/>
    </location>
    <ligand>
        <name>ATP</name>
        <dbReference type="ChEBI" id="CHEBI:30616"/>
    </ligand>
</feature>
<feature type="binding site" evidence="1">
    <location>
        <position position="102"/>
    </location>
    <ligand>
        <name>ATP</name>
        <dbReference type="ChEBI" id="CHEBI:30616"/>
    </ligand>
</feature>
<feature type="binding site" evidence="1">
    <location>
        <position position="107"/>
    </location>
    <ligand>
        <name>ATP</name>
        <dbReference type="ChEBI" id="CHEBI:30616"/>
    </ligand>
</feature>
<feature type="binding site" evidence="1">
    <location>
        <position position="199"/>
    </location>
    <ligand>
        <name>Mg(2+)</name>
        <dbReference type="ChEBI" id="CHEBI:18420"/>
    </ligand>
</feature>
<feature type="binding site" evidence="1">
    <location>
        <position position="213"/>
    </location>
    <ligand>
        <name>Mg(2+)</name>
        <dbReference type="ChEBI" id="CHEBI:18420"/>
    </ligand>
</feature>
<feature type="binding site" evidence="1">
    <location>
        <position position="264"/>
    </location>
    <ligand>
        <name>substrate</name>
        <note>ligand shared with subunit alpha</note>
    </ligand>
</feature>
<feature type="binding site" evidence="1">
    <location>
        <begin position="321"/>
        <end position="323"/>
    </location>
    <ligand>
        <name>substrate</name>
        <note>ligand shared with subunit alpha</note>
    </ligand>
</feature>
<dbReference type="EC" id="6.2.1.5" evidence="1"/>
<dbReference type="EMBL" id="CP000671">
    <property type="protein sequence ID" value="ABQ98565.1"/>
    <property type="molecule type" value="Genomic_DNA"/>
</dbReference>
<dbReference type="SMR" id="A5UCR4"/>
<dbReference type="KEGG" id="hip:CGSHiEE_06060"/>
<dbReference type="HOGENOM" id="CLU_037430_0_2_6"/>
<dbReference type="UniPathway" id="UPA00223">
    <property type="reaction ID" value="UER00999"/>
</dbReference>
<dbReference type="GO" id="GO:0005829">
    <property type="term" value="C:cytosol"/>
    <property type="evidence" value="ECO:0007669"/>
    <property type="project" value="TreeGrafter"/>
</dbReference>
<dbReference type="GO" id="GO:0042709">
    <property type="term" value="C:succinate-CoA ligase complex"/>
    <property type="evidence" value="ECO:0007669"/>
    <property type="project" value="TreeGrafter"/>
</dbReference>
<dbReference type="GO" id="GO:0005524">
    <property type="term" value="F:ATP binding"/>
    <property type="evidence" value="ECO:0007669"/>
    <property type="project" value="UniProtKB-UniRule"/>
</dbReference>
<dbReference type="GO" id="GO:0000287">
    <property type="term" value="F:magnesium ion binding"/>
    <property type="evidence" value="ECO:0007669"/>
    <property type="project" value="UniProtKB-UniRule"/>
</dbReference>
<dbReference type="GO" id="GO:0004775">
    <property type="term" value="F:succinate-CoA ligase (ADP-forming) activity"/>
    <property type="evidence" value="ECO:0007669"/>
    <property type="project" value="UniProtKB-UniRule"/>
</dbReference>
<dbReference type="GO" id="GO:0004776">
    <property type="term" value="F:succinate-CoA ligase (GDP-forming) activity"/>
    <property type="evidence" value="ECO:0007669"/>
    <property type="project" value="RHEA"/>
</dbReference>
<dbReference type="GO" id="GO:0006104">
    <property type="term" value="P:succinyl-CoA metabolic process"/>
    <property type="evidence" value="ECO:0007669"/>
    <property type="project" value="TreeGrafter"/>
</dbReference>
<dbReference type="GO" id="GO:0006099">
    <property type="term" value="P:tricarboxylic acid cycle"/>
    <property type="evidence" value="ECO:0007669"/>
    <property type="project" value="UniProtKB-UniRule"/>
</dbReference>
<dbReference type="FunFam" id="3.30.1490.20:FF:000002">
    <property type="entry name" value="Succinate--CoA ligase [ADP-forming] subunit beta"/>
    <property type="match status" value="1"/>
</dbReference>
<dbReference type="FunFam" id="3.30.470.20:FF:000002">
    <property type="entry name" value="Succinate--CoA ligase [ADP-forming] subunit beta"/>
    <property type="match status" value="1"/>
</dbReference>
<dbReference type="FunFam" id="3.40.50.261:FF:000001">
    <property type="entry name" value="Succinate--CoA ligase [ADP-forming] subunit beta"/>
    <property type="match status" value="1"/>
</dbReference>
<dbReference type="Gene3D" id="3.30.1490.20">
    <property type="entry name" value="ATP-grasp fold, A domain"/>
    <property type="match status" value="1"/>
</dbReference>
<dbReference type="Gene3D" id="3.30.470.20">
    <property type="entry name" value="ATP-grasp fold, B domain"/>
    <property type="match status" value="1"/>
</dbReference>
<dbReference type="Gene3D" id="3.40.50.261">
    <property type="entry name" value="Succinyl-CoA synthetase domains"/>
    <property type="match status" value="1"/>
</dbReference>
<dbReference type="HAMAP" id="MF_00558">
    <property type="entry name" value="Succ_CoA_beta"/>
    <property type="match status" value="1"/>
</dbReference>
<dbReference type="InterPro" id="IPR013650">
    <property type="entry name" value="ATP-grasp_succ-CoA_synth-type"/>
</dbReference>
<dbReference type="InterPro" id="IPR013815">
    <property type="entry name" value="ATP_grasp_subdomain_1"/>
</dbReference>
<dbReference type="InterPro" id="IPR017866">
    <property type="entry name" value="Succ-CoA_synthase_bsu_CS"/>
</dbReference>
<dbReference type="InterPro" id="IPR005811">
    <property type="entry name" value="SUCC_ACL_C"/>
</dbReference>
<dbReference type="InterPro" id="IPR005809">
    <property type="entry name" value="Succ_CoA_ligase-like_bsu"/>
</dbReference>
<dbReference type="InterPro" id="IPR016102">
    <property type="entry name" value="Succinyl-CoA_synth-like"/>
</dbReference>
<dbReference type="NCBIfam" id="NF001913">
    <property type="entry name" value="PRK00696.1"/>
    <property type="match status" value="1"/>
</dbReference>
<dbReference type="NCBIfam" id="TIGR01016">
    <property type="entry name" value="sucCoAbeta"/>
    <property type="match status" value="1"/>
</dbReference>
<dbReference type="PANTHER" id="PTHR11815:SF10">
    <property type="entry name" value="SUCCINATE--COA LIGASE [GDP-FORMING] SUBUNIT BETA, MITOCHONDRIAL"/>
    <property type="match status" value="1"/>
</dbReference>
<dbReference type="PANTHER" id="PTHR11815">
    <property type="entry name" value="SUCCINYL-COA SYNTHETASE BETA CHAIN"/>
    <property type="match status" value="1"/>
</dbReference>
<dbReference type="Pfam" id="PF08442">
    <property type="entry name" value="ATP-grasp_2"/>
    <property type="match status" value="1"/>
</dbReference>
<dbReference type="Pfam" id="PF00549">
    <property type="entry name" value="Ligase_CoA"/>
    <property type="match status" value="1"/>
</dbReference>
<dbReference type="PIRSF" id="PIRSF001554">
    <property type="entry name" value="SucCS_beta"/>
    <property type="match status" value="1"/>
</dbReference>
<dbReference type="SUPFAM" id="SSF56059">
    <property type="entry name" value="Glutathione synthetase ATP-binding domain-like"/>
    <property type="match status" value="1"/>
</dbReference>
<dbReference type="SUPFAM" id="SSF52210">
    <property type="entry name" value="Succinyl-CoA synthetase domains"/>
    <property type="match status" value="1"/>
</dbReference>
<dbReference type="PROSITE" id="PS01217">
    <property type="entry name" value="SUCCINYL_COA_LIG_3"/>
    <property type="match status" value="1"/>
</dbReference>
<name>SUCC_HAEIE</name>
<keyword id="KW-0067">ATP-binding</keyword>
<keyword id="KW-0436">Ligase</keyword>
<keyword id="KW-0460">Magnesium</keyword>
<keyword id="KW-0479">Metal-binding</keyword>
<keyword id="KW-0547">Nucleotide-binding</keyword>
<keyword id="KW-0816">Tricarboxylic acid cycle</keyword>
<protein>
    <recommendedName>
        <fullName evidence="1">Succinate--CoA ligase [ADP-forming] subunit beta</fullName>
        <ecNumber evidence="1">6.2.1.5</ecNumber>
    </recommendedName>
    <alternativeName>
        <fullName evidence="1">Succinyl-CoA synthetase subunit beta</fullName>
        <shortName evidence="1">SCS-beta</shortName>
    </alternativeName>
</protein>
<proteinExistence type="inferred from homology"/>